<evidence type="ECO:0000255" key="1">
    <source>
        <dbReference type="HAMAP-Rule" id="MF_02051"/>
    </source>
</evidence>
<reference key="1">
    <citation type="submission" date="2008-02" db="EMBL/GenBank/DDBJ databases">
        <title>Complete sequence of Yersinia pseudotuberculosis YPIII.</title>
        <authorList>
            <consortium name="US DOE Joint Genome Institute"/>
            <person name="Copeland A."/>
            <person name="Lucas S."/>
            <person name="Lapidus A."/>
            <person name="Glavina del Rio T."/>
            <person name="Dalin E."/>
            <person name="Tice H."/>
            <person name="Bruce D."/>
            <person name="Goodwin L."/>
            <person name="Pitluck S."/>
            <person name="Munk A.C."/>
            <person name="Brettin T."/>
            <person name="Detter J.C."/>
            <person name="Han C."/>
            <person name="Tapia R."/>
            <person name="Schmutz J."/>
            <person name="Larimer F."/>
            <person name="Land M."/>
            <person name="Hauser L."/>
            <person name="Challacombe J.F."/>
            <person name="Green L."/>
            <person name="Lindler L.E."/>
            <person name="Nikolich M.P."/>
            <person name="Richardson P."/>
        </authorList>
    </citation>
    <scope>NUCLEOTIDE SEQUENCE [LARGE SCALE GENOMIC DNA]</scope>
    <source>
        <strain>YPIII</strain>
    </source>
</reference>
<name>LSRG_YERPY</name>
<dbReference type="EC" id="5.3.1.32" evidence="1"/>
<dbReference type="EMBL" id="CP000950">
    <property type="protein sequence ID" value="ACA69922.1"/>
    <property type="molecule type" value="Genomic_DNA"/>
</dbReference>
<dbReference type="RefSeq" id="WP_002209186.1">
    <property type="nucleotide sequence ID" value="NZ_CP009792.1"/>
</dbReference>
<dbReference type="SMR" id="B1JLQ5"/>
<dbReference type="GeneID" id="96664050"/>
<dbReference type="KEGG" id="ypy:YPK_3655"/>
<dbReference type="PATRIC" id="fig|502800.11.peg.4410"/>
<dbReference type="GO" id="GO:0005829">
    <property type="term" value="C:cytosol"/>
    <property type="evidence" value="ECO:0007669"/>
    <property type="project" value="TreeGrafter"/>
</dbReference>
<dbReference type="GO" id="GO:0002952">
    <property type="term" value="F:(4S)-4-hydroxy-5-phosphonooxypentane-2,3-dione isomerase activity"/>
    <property type="evidence" value="ECO:0007669"/>
    <property type="project" value="UniProtKB-EC"/>
</dbReference>
<dbReference type="GO" id="GO:0016491">
    <property type="term" value="F:oxidoreductase activity"/>
    <property type="evidence" value="ECO:0007669"/>
    <property type="project" value="TreeGrafter"/>
</dbReference>
<dbReference type="FunFam" id="3.30.70.100:FF:000016">
    <property type="entry name" value="(4S)-4-hydroxy-5-phosphonooxypentane-2,3-dione isomerase"/>
    <property type="match status" value="1"/>
</dbReference>
<dbReference type="Gene3D" id="3.30.70.100">
    <property type="match status" value="1"/>
</dbReference>
<dbReference type="HAMAP" id="MF_02051">
    <property type="entry name" value="LsrG"/>
    <property type="match status" value="1"/>
</dbReference>
<dbReference type="InterPro" id="IPR007138">
    <property type="entry name" value="ABM_dom"/>
</dbReference>
<dbReference type="InterPro" id="IPR050744">
    <property type="entry name" value="AI-2_Isomerase_LsrG"/>
</dbReference>
<dbReference type="InterPro" id="IPR011008">
    <property type="entry name" value="Dimeric_a/b-barrel"/>
</dbReference>
<dbReference type="InterPro" id="IPR033672">
    <property type="entry name" value="LsrG"/>
</dbReference>
<dbReference type="NCBIfam" id="NF007791">
    <property type="entry name" value="PRK10486.1"/>
    <property type="match status" value="1"/>
</dbReference>
<dbReference type="PANTHER" id="PTHR33336:SF1">
    <property type="entry name" value="(4S)-4-HYDROXY-5-PHOSPHONOOXYPENTANE-2,3-DIONE ISOMERASE"/>
    <property type="match status" value="1"/>
</dbReference>
<dbReference type="PANTHER" id="PTHR33336">
    <property type="entry name" value="QUINOL MONOOXYGENASE YGIN-RELATED"/>
    <property type="match status" value="1"/>
</dbReference>
<dbReference type="Pfam" id="PF03992">
    <property type="entry name" value="ABM"/>
    <property type="match status" value="1"/>
</dbReference>
<dbReference type="SUPFAM" id="SSF54909">
    <property type="entry name" value="Dimeric alpha+beta barrel"/>
    <property type="match status" value="1"/>
</dbReference>
<dbReference type="PROSITE" id="PS51725">
    <property type="entry name" value="ABM"/>
    <property type="match status" value="1"/>
</dbReference>
<accession>B1JLQ5</accession>
<comment type="function">
    <text evidence="1">Involved in the degradation of phospho-AI-2, thereby terminating induction of the lsr operon and closing the AI-2 signaling cycle. Catalyzes the conversion of (4S)-4-hydroxy-5-phosphonooxypentane-2,3-dione (P-DPD) to 3-hydroxy-5-phosphonooxypentane-2,4-dione (P-HPD).</text>
</comment>
<comment type="catalytic activity">
    <reaction evidence="1">
        <text>(2S)-2-hydroxy-3,4-dioxopentyl phosphate = 3-hydroxy-2,4-dioxopentyl phosphate</text>
        <dbReference type="Rhea" id="RHEA:44360"/>
        <dbReference type="ChEBI" id="CHEBI:71677"/>
        <dbReference type="ChEBI" id="CHEBI:84359"/>
        <dbReference type="EC" id="5.3.1.32"/>
    </reaction>
</comment>
<comment type="subunit">
    <text evidence="1">Homodimer.</text>
</comment>
<comment type="subcellular location">
    <subcellularLocation>
        <location evidence="1">Cytoplasm</location>
    </subcellularLocation>
</comment>
<comment type="similarity">
    <text evidence="1">Belongs to the LsrG family.</text>
</comment>
<protein>
    <recommendedName>
        <fullName evidence="1">(4S)-4-hydroxy-5-phosphonooxypentane-2,3-dione isomerase</fullName>
        <ecNumber evidence="1">5.3.1.32</ecNumber>
    </recommendedName>
    <alternativeName>
        <fullName evidence="1">Autoinducer 2-degrading protein LsrG</fullName>
        <shortName evidence="1">AI-2-degrading protein LsrG</shortName>
    </alternativeName>
    <alternativeName>
        <fullName evidence="1">Phospho-(S)-4,5-dihydroxy-2,3-pentanedione isomerase</fullName>
    </alternativeName>
    <alternativeName>
        <fullName evidence="1">Phospho-AI-2 isomerase</fullName>
    </alternativeName>
</protein>
<gene>
    <name evidence="1" type="primary">lsrG</name>
    <name type="ordered locus">YPK_3655</name>
</gene>
<organism>
    <name type="scientific">Yersinia pseudotuberculosis serotype O:3 (strain YPIII)</name>
    <dbReference type="NCBI Taxonomy" id="502800"/>
    <lineage>
        <taxon>Bacteria</taxon>
        <taxon>Pseudomonadati</taxon>
        <taxon>Pseudomonadota</taxon>
        <taxon>Gammaproteobacteria</taxon>
        <taxon>Enterobacterales</taxon>
        <taxon>Yersiniaceae</taxon>
        <taxon>Yersinia</taxon>
    </lineage>
</organism>
<sequence length="96" mass="11098">MHVTLVEINVKEDKVDQFIEVFRANHLGSIREAGNLRFDVLRDEHIPTRFYIYEAYTDEAAVAIHKTTPHYLQCVEQLAPLMTGPRKKTVFIGLMP</sequence>
<keyword id="KW-0963">Cytoplasm</keyword>
<keyword id="KW-0413">Isomerase</keyword>
<proteinExistence type="inferred from homology"/>
<feature type="chain" id="PRO_0000351585" description="(4S)-4-hydroxy-5-phosphonooxypentane-2,3-dione isomerase">
    <location>
        <begin position="1"/>
        <end position="96"/>
    </location>
</feature>
<feature type="domain" description="ABM" evidence="1">
    <location>
        <begin position="2"/>
        <end position="91"/>
    </location>
</feature>